<evidence type="ECO:0000255" key="1">
    <source>
        <dbReference type="HAMAP-Rule" id="MF_00558"/>
    </source>
</evidence>
<name>SUCC_SALAI</name>
<feature type="chain" id="PRO_1000082211" description="Succinate--CoA ligase [ADP-forming] subunit beta">
    <location>
        <begin position="1"/>
        <end position="392"/>
    </location>
</feature>
<feature type="domain" description="ATP-grasp" evidence="1">
    <location>
        <begin position="9"/>
        <end position="236"/>
    </location>
</feature>
<feature type="binding site" evidence="1">
    <location>
        <position position="45"/>
    </location>
    <ligand>
        <name>ATP</name>
        <dbReference type="ChEBI" id="CHEBI:30616"/>
    </ligand>
</feature>
<feature type="binding site" evidence="1">
    <location>
        <begin position="52"/>
        <end position="54"/>
    </location>
    <ligand>
        <name>ATP</name>
        <dbReference type="ChEBI" id="CHEBI:30616"/>
    </ligand>
</feature>
<feature type="binding site" evidence="1">
    <location>
        <position position="94"/>
    </location>
    <ligand>
        <name>ATP</name>
        <dbReference type="ChEBI" id="CHEBI:30616"/>
    </ligand>
</feature>
<feature type="binding site" evidence="1">
    <location>
        <position position="99"/>
    </location>
    <ligand>
        <name>ATP</name>
        <dbReference type="ChEBI" id="CHEBI:30616"/>
    </ligand>
</feature>
<feature type="binding site" evidence="1">
    <location>
        <position position="191"/>
    </location>
    <ligand>
        <name>Mg(2+)</name>
        <dbReference type="ChEBI" id="CHEBI:18420"/>
    </ligand>
</feature>
<feature type="binding site" evidence="1">
    <location>
        <position position="205"/>
    </location>
    <ligand>
        <name>Mg(2+)</name>
        <dbReference type="ChEBI" id="CHEBI:18420"/>
    </ligand>
</feature>
<feature type="binding site" evidence="1">
    <location>
        <position position="256"/>
    </location>
    <ligand>
        <name>substrate</name>
        <note>ligand shared with subunit alpha</note>
    </ligand>
</feature>
<feature type="binding site" evidence="1">
    <location>
        <begin position="318"/>
        <end position="320"/>
    </location>
    <ligand>
        <name>substrate</name>
        <note>ligand shared with subunit alpha</note>
    </ligand>
</feature>
<dbReference type="EC" id="6.2.1.5" evidence="1"/>
<dbReference type="EMBL" id="CP000850">
    <property type="protein sequence ID" value="ABV99984.1"/>
    <property type="molecule type" value="Genomic_DNA"/>
</dbReference>
<dbReference type="SMR" id="A8M469"/>
<dbReference type="STRING" id="391037.Sare_4203"/>
<dbReference type="KEGG" id="saq:Sare_4203"/>
<dbReference type="PATRIC" id="fig|391037.6.peg.4243"/>
<dbReference type="eggNOG" id="COG0045">
    <property type="taxonomic scope" value="Bacteria"/>
</dbReference>
<dbReference type="HOGENOM" id="CLU_037430_0_2_11"/>
<dbReference type="OrthoDB" id="9802602at2"/>
<dbReference type="UniPathway" id="UPA00223">
    <property type="reaction ID" value="UER00999"/>
</dbReference>
<dbReference type="GO" id="GO:0005829">
    <property type="term" value="C:cytosol"/>
    <property type="evidence" value="ECO:0007669"/>
    <property type="project" value="TreeGrafter"/>
</dbReference>
<dbReference type="GO" id="GO:0042709">
    <property type="term" value="C:succinate-CoA ligase complex"/>
    <property type="evidence" value="ECO:0007669"/>
    <property type="project" value="TreeGrafter"/>
</dbReference>
<dbReference type="GO" id="GO:0005524">
    <property type="term" value="F:ATP binding"/>
    <property type="evidence" value="ECO:0007669"/>
    <property type="project" value="UniProtKB-UniRule"/>
</dbReference>
<dbReference type="GO" id="GO:0000287">
    <property type="term" value="F:magnesium ion binding"/>
    <property type="evidence" value="ECO:0007669"/>
    <property type="project" value="UniProtKB-UniRule"/>
</dbReference>
<dbReference type="GO" id="GO:0004775">
    <property type="term" value="F:succinate-CoA ligase (ADP-forming) activity"/>
    <property type="evidence" value="ECO:0007669"/>
    <property type="project" value="UniProtKB-UniRule"/>
</dbReference>
<dbReference type="GO" id="GO:0004776">
    <property type="term" value="F:succinate-CoA ligase (GDP-forming) activity"/>
    <property type="evidence" value="ECO:0007669"/>
    <property type="project" value="RHEA"/>
</dbReference>
<dbReference type="GO" id="GO:0006104">
    <property type="term" value="P:succinyl-CoA metabolic process"/>
    <property type="evidence" value="ECO:0007669"/>
    <property type="project" value="TreeGrafter"/>
</dbReference>
<dbReference type="GO" id="GO:0006099">
    <property type="term" value="P:tricarboxylic acid cycle"/>
    <property type="evidence" value="ECO:0007669"/>
    <property type="project" value="UniProtKB-UniRule"/>
</dbReference>
<dbReference type="FunFam" id="3.30.1490.20:FF:000014">
    <property type="entry name" value="Succinate--CoA ligase [ADP-forming] subunit beta"/>
    <property type="match status" value="1"/>
</dbReference>
<dbReference type="FunFam" id="3.30.470.20:FF:000002">
    <property type="entry name" value="Succinate--CoA ligase [ADP-forming] subunit beta"/>
    <property type="match status" value="1"/>
</dbReference>
<dbReference type="FunFam" id="3.40.50.261:FF:000007">
    <property type="entry name" value="Succinate--CoA ligase [ADP-forming] subunit beta"/>
    <property type="match status" value="1"/>
</dbReference>
<dbReference type="Gene3D" id="3.30.1490.20">
    <property type="entry name" value="ATP-grasp fold, A domain"/>
    <property type="match status" value="1"/>
</dbReference>
<dbReference type="Gene3D" id="3.30.470.20">
    <property type="entry name" value="ATP-grasp fold, B domain"/>
    <property type="match status" value="1"/>
</dbReference>
<dbReference type="Gene3D" id="3.40.50.261">
    <property type="entry name" value="Succinyl-CoA synthetase domains"/>
    <property type="match status" value="1"/>
</dbReference>
<dbReference type="HAMAP" id="MF_00558">
    <property type="entry name" value="Succ_CoA_beta"/>
    <property type="match status" value="1"/>
</dbReference>
<dbReference type="InterPro" id="IPR011761">
    <property type="entry name" value="ATP-grasp"/>
</dbReference>
<dbReference type="InterPro" id="IPR013650">
    <property type="entry name" value="ATP-grasp_succ-CoA_synth-type"/>
</dbReference>
<dbReference type="InterPro" id="IPR013815">
    <property type="entry name" value="ATP_grasp_subdomain_1"/>
</dbReference>
<dbReference type="InterPro" id="IPR017866">
    <property type="entry name" value="Succ-CoA_synthase_bsu_CS"/>
</dbReference>
<dbReference type="InterPro" id="IPR005811">
    <property type="entry name" value="SUCC_ACL_C"/>
</dbReference>
<dbReference type="InterPro" id="IPR005809">
    <property type="entry name" value="Succ_CoA_ligase-like_bsu"/>
</dbReference>
<dbReference type="InterPro" id="IPR016102">
    <property type="entry name" value="Succinyl-CoA_synth-like"/>
</dbReference>
<dbReference type="NCBIfam" id="NF001913">
    <property type="entry name" value="PRK00696.1"/>
    <property type="match status" value="1"/>
</dbReference>
<dbReference type="NCBIfam" id="TIGR01016">
    <property type="entry name" value="sucCoAbeta"/>
    <property type="match status" value="1"/>
</dbReference>
<dbReference type="PANTHER" id="PTHR11815:SF10">
    <property type="entry name" value="SUCCINATE--COA LIGASE [GDP-FORMING] SUBUNIT BETA, MITOCHONDRIAL"/>
    <property type="match status" value="1"/>
</dbReference>
<dbReference type="PANTHER" id="PTHR11815">
    <property type="entry name" value="SUCCINYL-COA SYNTHETASE BETA CHAIN"/>
    <property type="match status" value="1"/>
</dbReference>
<dbReference type="Pfam" id="PF08442">
    <property type="entry name" value="ATP-grasp_2"/>
    <property type="match status" value="1"/>
</dbReference>
<dbReference type="Pfam" id="PF00549">
    <property type="entry name" value="Ligase_CoA"/>
    <property type="match status" value="1"/>
</dbReference>
<dbReference type="PIRSF" id="PIRSF001554">
    <property type="entry name" value="SucCS_beta"/>
    <property type="match status" value="1"/>
</dbReference>
<dbReference type="SUPFAM" id="SSF56059">
    <property type="entry name" value="Glutathione synthetase ATP-binding domain-like"/>
    <property type="match status" value="1"/>
</dbReference>
<dbReference type="SUPFAM" id="SSF52210">
    <property type="entry name" value="Succinyl-CoA synthetase domains"/>
    <property type="match status" value="1"/>
</dbReference>
<dbReference type="PROSITE" id="PS50975">
    <property type="entry name" value="ATP_GRASP"/>
    <property type="match status" value="1"/>
</dbReference>
<dbReference type="PROSITE" id="PS01217">
    <property type="entry name" value="SUCCINYL_COA_LIG_3"/>
    <property type="match status" value="1"/>
</dbReference>
<protein>
    <recommendedName>
        <fullName evidence="1">Succinate--CoA ligase [ADP-forming] subunit beta</fullName>
        <ecNumber evidence="1">6.2.1.5</ecNumber>
    </recommendedName>
    <alternativeName>
        <fullName evidence="1">Succinyl-CoA synthetase subunit beta</fullName>
        <shortName evidence="1">SCS-beta</shortName>
    </alternativeName>
</protein>
<proteinExistence type="inferred from homology"/>
<keyword id="KW-0067">ATP-binding</keyword>
<keyword id="KW-0436">Ligase</keyword>
<keyword id="KW-0460">Magnesium</keyword>
<keyword id="KW-0479">Metal-binding</keyword>
<keyword id="KW-0547">Nucleotide-binding</keyword>
<keyword id="KW-0816">Tricarboxylic acid cycle</keyword>
<organism>
    <name type="scientific">Salinispora arenicola (strain CNS-205)</name>
    <dbReference type="NCBI Taxonomy" id="391037"/>
    <lineage>
        <taxon>Bacteria</taxon>
        <taxon>Bacillati</taxon>
        <taxon>Actinomycetota</taxon>
        <taxon>Actinomycetes</taxon>
        <taxon>Micromonosporales</taxon>
        <taxon>Micromonosporaceae</taxon>
        <taxon>Salinispora</taxon>
    </lineage>
</organism>
<comment type="function">
    <text evidence="1">Succinyl-CoA synthetase functions in the citric acid cycle (TCA), coupling the hydrolysis of succinyl-CoA to the synthesis of either ATP or GTP and thus represents the only step of substrate-level phosphorylation in the TCA. The beta subunit provides nucleotide specificity of the enzyme and binds the substrate succinate, while the binding sites for coenzyme A and phosphate are found in the alpha subunit.</text>
</comment>
<comment type="catalytic activity">
    <reaction evidence="1">
        <text>succinate + ATP + CoA = succinyl-CoA + ADP + phosphate</text>
        <dbReference type="Rhea" id="RHEA:17661"/>
        <dbReference type="ChEBI" id="CHEBI:30031"/>
        <dbReference type="ChEBI" id="CHEBI:30616"/>
        <dbReference type="ChEBI" id="CHEBI:43474"/>
        <dbReference type="ChEBI" id="CHEBI:57287"/>
        <dbReference type="ChEBI" id="CHEBI:57292"/>
        <dbReference type="ChEBI" id="CHEBI:456216"/>
        <dbReference type="EC" id="6.2.1.5"/>
    </reaction>
    <physiologicalReaction direction="right-to-left" evidence="1">
        <dbReference type="Rhea" id="RHEA:17663"/>
    </physiologicalReaction>
</comment>
<comment type="catalytic activity">
    <reaction evidence="1">
        <text>GTP + succinate + CoA = succinyl-CoA + GDP + phosphate</text>
        <dbReference type="Rhea" id="RHEA:22120"/>
        <dbReference type="ChEBI" id="CHEBI:30031"/>
        <dbReference type="ChEBI" id="CHEBI:37565"/>
        <dbReference type="ChEBI" id="CHEBI:43474"/>
        <dbReference type="ChEBI" id="CHEBI:57287"/>
        <dbReference type="ChEBI" id="CHEBI:57292"/>
        <dbReference type="ChEBI" id="CHEBI:58189"/>
    </reaction>
    <physiologicalReaction direction="right-to-left" evidence="1">
        <dbReference type="Rhea" id="RHEA:22122"/>
    </physiologicalReaction>
</comment>
<comment type="cofactor">
    <cofactor evidence="1">
        <name>Mg(2+)</name>
        <dbReference type="ChEBI" id="CHEBI:18420"/>
    </cofactor>
    <text evidence="1">Binds 1 Mg(2+) ion per subunit.</text>
</comment>
<comment type="pathway">
    <text evidence="1">Carbohydrate metabolism; tricarboxylic acid cycle; succinate from succinyl-CoA (ligase route): step 1/1.</text>
</comment>
<comment type="subunit">
    <text evidence="1">Heterotetramer of two alpha and two beta subunits.</text>
</comment>
<comment type="similarity">
    <text evidence="1">Belongs to the succinate/malate CoA ligase beta subunit family.</text>
</comment>
<gene>
    <name evidence="1" type="primary">sucC</name>
    <name type="ordered locus">Sare_4203</name>
</gene>
<sequence length="392" mass="40866">MDLYEYQGRDLFERHGLPVLAGGVATTPEEARAIAERLGGRVVVKAQVKVGGRGKAGGVKLAEGADETVARATDILGMDIKGHTVHKVMITVTADVAEEYYFSYLLDRANRTFLCIASVAGGMDIEQVAAETPEKVVKAPIDANTGVDAAMARQIITRAGFPAEVVDQAVEVAVDLWKAFVAEDATLVEVNPLARTGQGGLLLLDAKVSLDENAAFRHPDHEALVDQAAVDPLEQAAKEKDLNYVKLDGEVGIIGNGAGLVMSTLDVVAYAGERHGGVKPANFLDIGGGASAAVMANGLEIVLSDPSVKSVFVNVFGGITACDAVANGIVQALALLEQRGEKVTRPLVVRLDGNNAEAGRAILDGANNPLIQRVDTMDGAAERAAELAAAGV</sequence>
<accession>A8M469</accession>
<reference key="1">
    <citation type="submission" date="2007-10" db="EMBL/GenBank/DDBJ databases">
        <title>Complete sequence of Salinispora arenicola CNS-205.</title>
        <authorList>
            <consortium name="US DOE Joint Genome Institute"/>
            <person name="Copeland A."/>
            <person name="Lucas S."/>
            <person name="Lapidus A."/>
            <person name="Barry K."/>
            <person name="Glavina del Rio T."/>
            <person name="Dalin E."/>
            <person name="Tice H."/>
            <person name="Pitluck S."/>
            <person name="Foster B."/>
            <person name="Schmutz J."/>
            <person name="Larimer F."/>
            <person name="Land M."/>
            <person name="Hauser L."/>
            <person name="Kyrpides N."/>
            <person name="Ivanova N."/>
            <person name="Jensen P.R."/>
            <person name="Moore B.S."/>
            <person name="Penn K."/>
            <person name="Jenkins C."/>
            <person name="Udwary D."/>
            <person name="Xiang L."/>
            <person name="Gontang E."/>
            <person name="Richardson P."/>
        </authorList>
    </citation>
    <scope>NUCLEOTIDE SEQUENCE [LARGE SCALE GENOMIC DNA]</scope>
    <source>
        <strain>CNS-205</strain>
    </source>
</reference>